<sequence>MLEFEQGFNHLATLKVIGVGGGGNNAVNRMIDHGMNNVEFIAINTDGQALNLSKAESKIQIGEKLTRGLGAGANPEIGKKAAEESREQIEDAIQGADMVFVTSGMGGGTGTGAAPVVAKIAKEMGALTVGVVTRPFSFEGRKRQTQAAAGVEAMKAAVDTLIVIPNDRLLDIVDKSTPMMEAFKEADNVLRQGVQGISDLIAVSGEVNLDFADVKTIMSNQGSALMGIGVSSGENRAVEAAKKAISSPLLETSIVGAQGVLMNITGGESLSLFEAQEAADIVQDAADEDVNMIFGTVINPELQDEIVVTVIATGFDDKPTSHGRKSGSTGFGTSVNTSSNATSKDESFTSNSSNAQATDSVSERTHTTKEDDIPSFIRNREERRSRRTRR</sequence>
<gene>
    <name evidence="2" type="primary">ftsZ</name>
    <name type="ordered locus">SAV1186</name>
</gene>
<feature type="chain" id="PRO_0000114380" description="Cell division protein FtsZ">
    <location>
        <begin position="1"/>
        <end position="390"/>
    </location>
</feature>
<feature type="region of interest" description="Disordered" evidence="3">
    <location>
        <begin position="315"/>
        <end position="390"/>
    </location>
</feature>
<feature type="region of interest" description="Interaction with FtsA" evidence="1">
    <location>
        <begin position="371"/>
        <end position="380"/>
    </location>
</feature>
<feature type="compositionally biased region" description="Polar residues" evidence="3">
    <location>
        <begin position="326"/>
        <end position="360"/>
    </location>
</feature>
<feature type="compositionally biased region" description="Basic and acidic residues" evidence="3">
    <location>
        <begin position="361"/>
        <end position="384"/>
    </location>
</feature>
<feature type="binding site" evidence="2 4 5">
    <location>
        <begin position="21"/>
        <end position="25"/>
    </location>
    <ligand>
        <name>GTP</name>
        <dbReference type="ChEBI" id="CHEBI:37565"/>
    </ligand>
</feature>
<feature type="binding site" evidence="4 5">
    <location>
        <position position="29"/>
    </location>
    <ligand>
        <name>GTP</name>
        <dbReference type="ChEBI" id="CHEBI:37565"/>
    </ligand>
</feature>
<feature type="binding site" evidence="5">
    <location>
        <begin position="71"/>
        <end position="73"/>
    </location>
    <ligand>
        <name>GTP</name>
        <dbReference type="ChEBI" id="CHEBI:37565"/>
    </ligand>
</feature>
<feature type="binding site" evidence="2 4 5">
    <location>
        <begin position="108"/>
        <end position="110"/>
    </location>
    <ligand>
        <name>GTP</name>
        <dbReference type="ChEBI" id="CHEBI:37565"/>
    </ligand>
</feature>
<feature type="binding site" evidence="2 4 5">
    <location>
        <position position="139"/>
    </location>
    <ligand>
        <name>GTP</name>
        <dbReference type="ChEBI" id="CHEBI:37565"/>
    </ligand>
</feature>
<feature type="binding site" evidence="2 4 5">
    <location>
        <position position="143"/>
    </location>
    <ligand>
        <name>GTP</name>
        <dbReference type="ChEBI" id="CHEBI:37565"/>
    </ligand>
</feature>
<feature type="binding site" evidence="4 5">
    <location>
        <position position="166"/>
    </location>
    <ligand>
        <name>GTP</name>
        <dbReference type="ChEBI" id="CHEBI:37565"/>
    </ligand>
</feature>
<feature type="binding site" evidence="2 5">
    <location>
        <position position="187"/>
    </location>
    <ligand>
        <name>GTP</name>
        <dbReference type="ChEBI" id="CHEBI:37565"/>
    </ligand>
</feature>
<feature type="mutagenesis site" description="Lack of GTPase activity. Does not polymerize in the presence of calcium ions." evidence="4">
    <original>N</original>
    <variation>A</variation>
    <location>
        <position position="208"/>
    </location>
</feature>
<feature type="strand" evidence="6">
    <location>
        <begin position="14"/>
        <end position="19"/>
    </location>
</feature>
<feature type="helix" evidence="6">
    <location>
        <begin position="20"/>
        <end position="33"/>
    </location>
</feature>
<feature type="strand" evidence="6">
    <location>
        <begin position="39"/>
        <end position="45"/>
    </location>
</feature>
<feature type="helix" evidence="6">
    <location>
        <begin position="47"/>
        <end position="51"/>
    </location>
</feature>
<feature type="strand" evidence="6">
    <location>
        <begin position="56"/>
        <end position="60"/>
    </location>
</feature>
<feature type="helix" evidence="6">
    <location>
        <begin position="63"/>
        <end position="66"/>
    </location>
</feature>
<feature type="helix" evidence="6">
    <location>
        <begin position="75"/>
        <end position="84"/>
    </location>
</feature>
<feature type="helix" evidence="6">
    <location>
        <begin position="86"/>
        <end position="93"/>
    </location>
</feature>
<feature type="strand" evidence="6">
    <location>
        <begin position="97"/>
        <end position="104"/>
    </location>
</feature>
<feature type="helix" evidence="6">
    <location>
        <begin position="109"/>
        <end position="123"/>
    </location>
</feature>
<feature type="strand" evidence="6">
    <location>
        <begin position="127"/>
        <end position="134"/>
    </location>
</feature>
<feature type="helix" evidence="6">
    <location>
        <begin position="137"/>
        <end position="139"/>
    </location>
</feature>
<feature type="helix" evidence="6">
    <location>
        <begin position="141"/>
        <end position="157"/>
    </location>
</feature>
<feature type="strand" evidence="6">
    <location>
        <begin position="158"/>
        <end position="165"/>
    </location>
</feature>
<feature type="helix" evidence="6">
    <location>
        <begin position="166"/>
        <end position="171"/>
    </location>
</feature>
<feature type="helix" evidence="6">
    <location>
        <begin position="179"/>
        <end position="202"/>
    </location>
</feature>
<feature type="helix" evidence="6">
    <location>
        <begin position="211"/>
        <end position="218"/>
    </location>
</feature>
<feature type="strand" evidence="6">
    <location>
        <begin position="225"/>
        <end position="233"/>
    </location>
</feature>
<feature type="helix" evidence="6">
    <location>
        <begin position="236"/>
        <end position="244"/>
    </location>
</feature>
<feature type="helix" evidence="7">
    <location>
        <begin position="248"/>
        <end position="256"/>
    </location>
</feature>
<feature type="strand" evidence="6">
    <location>
        <begin position="259"/>
        <end position="266"/>
    </location>
</feature>
<feature type="helix" evidence="6">
    <location>
        <begin position="272"/>
        <end position="286"/>
    </location>
</feature>
<feature type="strand" evidence="6">
    <location>
        <begin position="291"/>
        <end position="298"/>
    </location>
</feature>
<feature type="helix" evidence="8">
    <location>
        <begin position="300"/>
        <end position="302"/>
    </location>
</feature>
<feature type="strand" evidence="6">
    <location>
        <begin position="303"/>
        <end position="313"/>
    </location>
</feature>
<name>FTSZ_STAAM</name>
<proteinExistence type="evidence at protein level"/>
<comment type="function">
    <text evidence="2">Essential cell division protein that forms a contractile ring structure (Z ring) at the future cell division site. The regulation of the ring assembly controls the timing and the location of cell division. One of the functions of the FtsZ ring is to recruit other cell division proteins to the septum to produce a new cell wall between the dividing cells. Binds GTP and shows GTPase activity.</text>
</comment>
<comment type="activity regulation">
    <text evidence="4">Calcium ions inhibit the GTPase activity and promote the polymerization of FtsZ.</text>
</comment>
<comment type="subunit">
    <text evidence="2">Homodimer. Polymerizes to form a dynamic ring structure in a strictly GTP-dependent manner. Interacts directly with several other division proteins.</text>
</comment>
<comment type="subcellular location">
    <subcellularLocation>
        <location evidence="2">Cytoplasm</location>
    </subcellularLocation>
    <text evidence="2">Assembles at midcell at the inner surface of the cytoplasmic membrane.</text>
</comment>
<comment type="similarity">
    <text evidence="2">Belongs to the FtsZ family.</text>
</comment>
<reference key="1">
    <citation type="journal article" date="2001" name="Lancet">
        <title>Whole genome sequencing of meticillin-resistant Staphylococcus aureus.</title>
        <authorList>
            <person name="Kuroda M."/>
            <person name="Ohta T."/>
            <person name="Uchiyama I."/>
            <person name="Baba T."/>
            <person name="Yuzawa H."/>
            <person name="Kobayashi I."/>
            <person name="Cui L."/>
            <person name="Oguchi A."/>
            <person name="Aoki K."/>
            <person name="Nagai Y."/>
            <person name="Lian J.-Q."/>
            <person name="Ito T."/>
            <person name="Kanamori M."/>
            <person name="Matsumaru H."/>
            <person name="Maruyama A."/>
            <person name="Murakami H."/>
            <person name="Hosoyama A."/>
            <person name="Mizutani-Ui Y."/>
            <person name="Takahashi N.K."/>
            <person name="Sawano T."/>
            <person name="Inoue R."/>
            <person name="Kaito C."/>
            <person name="Sekimizu K."/>
            <person name="Hirakawa H."/>
            <person name="Kuhara S."/>
            <person name="Goto S."/>
            <person name="Yabuzaki J."/>
            <person name="Kanehisa M."/>
            <person name="Yamashita A."/>
            <person name="Oshima K."/>
            <person name="Furuya K."/>
            <person name="Yoshino C."/>
            <person name="Shiba T."/>
            <person name="Hattori M."/>
            <person name="Ogasawara N."/>
            <person name="Hayashi H."/>
            <person name="Hiramatsu K."/>
        </authorList>
    </citation>
    <scope>NUCLEOTIDE SEQUENCE [LARGE SCALE GENOMIC DNA]</scope>
    <source>
        <strain>Mu50 / ATCC 700699</strain>
    </source>
</reference>
<reference key="2">
    <citation type="journal article" date="2012" name="Acta Crystallogr. D">
        <title>Structural reorganization of the bacterial cell-division protein FtsZ from Staphylococcus aureus.</title>
        <authorList>
            <person name="Matsui T."/>
            <person name="Yamane J."/>
            <person name="Mogi N."/>
            <person name="Yamaguchi H."/>
            <person name="Takemoto H."/>
            <person name="Yao M."/>
            <person name="Tanaka I."/>
        </authorList>
    </citation>
    <scope>X-RAY CRYSTALLOGRAPHY (1.73 ANGSTROMS) OF 12-316 OF APOPROTEIN AND IN COMPLEXES WITH GDP AND INHIBITOR</scope>
    <scope>ACTIVITY REGULATION</scope>
    <scope>MUTAGENESIS OF ASN-208</scope>
    <source>
        <strain>Mu50 / ATCC 700699</strain>
    </source>
</reference>
<reference key="3">
    <citation type="journal article" date="2014" name="J. Biol. Chem.">
        <title>Structural change in FtsZ induced by intermolecular interactions between bound GTP and the T7 loop.</title>
        <authorList>
            <person name="Matsui T."/>
            <person name="Han X."/>
            <person name="Yu J."/>
            <person name="Yao M."/>
            <person name="Tanaka I."/>
        </authorList>
    </citation>
    <scope>X-RAY CRYSTALLOGRAPHY (2.09 ANGSTROMS) OF WILD-TYPE AND OF MUTANTS IN COMPLEXES WITH GTP AND GDP</scope>
    <source>
        <strain>Mu50 / ATCC 700699</strain>
    </source>
</reference>
<evidence type="ECO:0000250" key="1"/>
<evidence type="ECO:0000255" key="2">
    <source>
        <dbReference type="HAMAP-Rule" id="MF_00909"/>
    </source>
</evidence>
<evidence type="ECO:0000256" key="3">
    <source>
        <dbReference type="SAM" id="MobiDB-lite"/>
    </source>
</evidence>
<evidence type="ECO:0000269" key="4">
    <source>
    </source>
</evidence>
<evidence type="ECO:0000269" key="5">
    <source>
    </source>
</evidence>
<evidence type="ECO:0007829" key="6">
    <source>
        <dbReference type="PDB" id="3VOA"/>
    </source>
</evidence>
<evidence type="ECO:0007829" key="7">
    <source>
        <dbReference type="PDB" id="3VPA"/>
    </source>
</evidence>
<evidence type="ECO:0007829" key="8">
    <source>
        <dbReference type="PDB" id="3WGM"/>
    </source>
</evidence>
<organism>
    <name type="scientific">Staphylococcus aureus (strain Mu50 / ATCC 700699)</name>
    <dbReference type="NCBI Taxonomy" id="158878"/>
    <lineage>
        <taxon>Bacteria</taxon>
        <taxon>Bacillati</taxon>
        <taxon>Bacillota</taxon>
        <taxon>Bacilli</taxon>
        <taxon>Bacillales</taxon>
        <taxon>Staphylococcaceae</taxon>
        <taxon>Staphylococcus</taxon>
    </lineage>
</organism>
<protein>
    <recommendedName>
        <fullName evidence="2">Cell division protein FtsZ</fullName>
    </recommendedName>
</protein>
<dbReference type="EMBL" id="BA000017">
    <property type="protein sequence ID" value="BAB57348.1"/>
    <property type="molecule type" value="Genomic_DNA"/>
</dbReference>
<dbReference type="RefSeq" id="WP_000888997.1">
    <property type="nucleotide sequence ID" value="NC_002758.2"/>
</dbReference>
<dbReference type="PDB" id="3VO8">
    <property type="method" value="X-ray"/>
    <property type="resolution" value="2.26 A"/>
    <property type="chains" value="A/B=1-390"/>
</dbReference>
<dbReference type="PDB" id="3VO9">
    <property type="method" value="X-ray"/>
    <property type="resolution" value="2.71 A"/>
    <property type="chains" value="A/B/C/D=12-316"/>
</dbReference>
<dbReference type="PDB" id="3VOA">
    <property type="method" value="X-ray"/>
    <property type="resolution" value="1.73 A"/>
    <property type="chains" value="A=12-316"/>
</dbReference>
<dbReference type="PDB" id="3VOB">
    <property type="method" value="X-ray"/>
    <property type="resolution" value="2.70 A"/>
    <property type="chains" value="A=12-316"/>
</dbReference>
<dbReference type="PDB" id="3VPA">
    <property type="method" value="X-ray"/>
    <property type="resolution" value="2.49 A"/>
    <property type="chains" value="A/B/C/D=12-316"/>
</dbReference>
<dbReference type="PDB" id="3WGJ">
    <property type="method" value="X-ray"/>
    <property type="resolution" value="2.18 A"/>
    <property type="chains" value="A/B=12-316"/>
</dbReference>
<dbReference type="PDB" id="3WGK">
    <property type="method" value="X-ray"/>
    <property type="resolution" value="2.80 A"/>
    <property type="chains" value="A/B=1-390"/>
</dbReference>
<dbReference type="PDB" id="3WGL">
    <property type="method" value="X-ray"/>
    <property type="resolution" value="3.07 A"/>
    <property type="chains" value="A/B=1-390"/>
</dbReference>
<dbReference type="PDB" id="3WGM">
    <property type="method" value="X-ray"/>
    <property type="resolution" value="2.09 A"/>
    <property type="chains" value="A/B=1-390"/>
</dbReference>
<dbReference type="PDB" id="3WGN">
    <property type="method" value="X-ray"/>
    <property type="resolution" value="2.61 A"/>
    <property type="chains" value="A/B=1-390"/>
</dbReference>
<dbReference type="PDBsum" id="3VO8"/>
<dbReference type="PDBsum" id="3VO9"/>
<dbReference type="PDBsum" id="3VOA"/>
<dbReference type="PDBsum" id="3VOB"/>
<dbReference type="PDBsum" id="3VPA"/>
<dbReference type="PDBsum" id="3WGJ"/>
<dbReference type="PDBsum" id="3WGK"/>
<dbReference type="PDBsum" id="3WGL"/>
<dbReference type="PDBsum" id="3WGM"/>
<dbReference type="PDBsum" id="3WGN"/>
<dbReference type="SMR" id="P0A029"/>
<dbReference type="GeneID" id="98345502"/>
<dbReference type="KEGG" id="sav:SAV1186"/>
<dbReference type="HOGENOM" id="CLU_024865_0_1_9"/>
<dbReference type="PhylomeDB" id="P0A029"/>
<dbReference type="EvolutionaryTrace" id="P0A029"/>
<dbReference type="Proteomes" id="UP000002481">
    <property type="component" value="Chromosome"/>
</dbReference>
<dbReference type="GO" id="GO:0032153">
    <property type="term" value="C:cell division site"/>
    <property type="evidence" value="ECO:0007669"/>
    <property type="project" value="UniProtKB-UniRule"/>
</dbReference>
<dbReference type="GO" id="GO:0005737">
    <property type="term" value="C:cytoplasm"/>
    <property type="evidence" value="ECO:0007669"/>
    <property type="project" value="UniProtKB-SubCell"/>
</dbReference>
<dbReference type="GO" id="GO:0005525">
    <property type="term" value="F:GTP binding"/>
    <property type="evidence" value="ECO:0007669"/>
    <property type="project" value="UniProtKB-UniRule"/>
</dbReference>
<dbReference type="GO" id="GO:0003924">
    <property type="term" value="F:GTPase activity"/>
    <property type="evidence" value="ECO:0007669"/>
    <property type="project" value="UniProtKB-UniRule"/>
</dbReference>
<dbReference type="GO" id="GO:0000917">
    <property type="term" value="P:division septum assembly"/>
    <property type="evidence" value="ECO:0007669"/>
    <property type="project" value="UniProtKB-KW"/>
</dbReference>
<dbReference type="GO" id="GO:0043093">
    <property type="term" value="P:FtsZ-dependent cytokinesis"/>
    <property type="evidence" value="ECO:0007669"/>
    <property type="project" value="UniProtKB-UniRule"/>
</dbReference>
<dbReference type="GO" id="GO:0051258">
    <property type="term" value="P:protein polymerization"/>
    <property type="evidence" value="ECO:0007669"/>
    <property type="project" value="UniProtKB-UniRule"/>
</dbReference>
<dbReference type="CDD" id="cd02201">
    <property type="entry name" value="FtsZ_type1"/>
    <property type="match status" value="1"/>
</dbReference>
<dbReference type="FunFam" id="3.30.1330.20:FF:000005">
    <property type="entry name" value="Cell division protein FtsZ"/>
    <property type="match status" value="1"/>
</dbReference>
<dbReference type="FunFam" id="3.40.50.1440:FF:000023">
    <property type="entry name" value="Cell division protein FtsZ"/>
    <property type="match status" value="1"/>
</dbReference>
<dbReference type="Gene3D" id="3.30.1330.20">
    <property type="entry name" value="Tubulin/FtsZ, C-terminal domain"/>
    <property type="match status" value="1"/>
</dbReference>
<dbReference type="Gene3D" id="3.40.50.1440">
    <property type="entry name" value="Tubulin/FtsZ, GTPase domain"/>
    <property type="match status" value="1"/>
</dbReference>
<dbReference type="HAMAP" id="MF_00909">
    <property type="entry name" value="FtsZ"/>
    <property type="match status" value="1"/>
</dbReference>
<dbReference type="InterPro" id="IPR000158">
    <property type="entry name" value="Cell_div_FtsZ"/>
</dbReference>
<dbReference type="InterPro" id="IPR020805">
    <property type="entry name" value="Cell_div_FtsZ_CS"/>
</dbReference>
<dbReference type="InterPro" id="IPR045061">
    <property type="entry name" value="FtsZ/CetZ"/>
</dbReference>
<dbReference type="InterPro" id="IPR024757">
    <property type="entry name" value="FtsZ_C"/>
</dbReference>
<dbReference type="InterPro" id="IPR008280">
    <property type="entry name" value="Tub_FtsZ_C"/>
</dbReference>
<dbReference type="InterPro" id="IPR037103">
    <property type="entry name" value="Tubulin/FtsZ-like_C"/>
</dbReference>
<dbReference type="InterPro" id="IPR018316">
    <property type="entry name" value="Tubulin/FtsZ_2-layer-sand-dom"/>
</dbReference>
<dbReference type="InterPro" id="IPR036525">
    <property type="entry name" value="Tubulin/FtsZ_GTPase_sf"/>
</dbReference>
<dbReference type="InterPro" id="IPR003008">
    <property type="entry name" value="Tubulin_FtsZ_GTPase"/>
</dbReference>
<dbReference type="NCBIfam" id="TIGR00065">
    <property type="entry name" value="ftsZ"/>
    <property type="match status" value="1"/>
</dbReference>
<dbReference type="PANTHER" id="PTHR30314">
    <property type="entry name" value="CELL DIVISION PROTEIN FTSZ-RELATED"/>
    <property type="match status" value="1"/>
</dbReference>
<dbReference type="PANTHER" id="PTHR30314:SF3">
    <property type="entry name" value="MITOCHONDRIAL DIVISION PROTEIN FSZA"/>
    <property type="match status" value="1"/>
</dbReference>
<dbReference type="Pfam" id="PF12327">
    <property type="entry name" value="FtsZ_C"/>
    <property type="match status" value="1"/>
</dbReference>
<dbReference type="Pfam" id="PF00091">
    <property type="entry name" value="Tubulin"/>
    <property type="match status" value="1"/>
</dbReference>
<dbReference type="PRINTS" id="PR00423">
    <property type="entry name" value="CELLDVISFTSZ"/>
</dbReference>
<dbReference type="SMART" id="SM00864">
    <property type="entry name" value="Tubulin"/>
    <property type="match status" value="1"/>
</dbReference>
<dbReference type="SMART" id="SM00865">
    <property type="entry name" value="Tubulin_C"/>
    <property type="match status" value="1"/>
</dbReference>
<dbReference type="SUPFAM" id="SSF55307">
    <property type="entry name" value="Tubulin C-terminal domain-like"/>
    <property type="match status" value="1"/>
</dbReference>
<dbReference type="SUPFAM" id="SSF52490">
    <property type="entry name" value="Tubulin nucleotide-binding domain-like"/>
    <property type="match status" value="1"/>
</dbReference>
<dbReference type="PROSITE" id="PS01134">
    <property type="entry name" value="FTSZ_1"/>
    <property type="match status" value="1"/>
</dbReference>
<dbReference type="PROSITE" id="PS01135">
    <property type="entry name" value="FTSZ_2"/>
    <property type="match status" value="1"/>
</dbReference>
<accession>P0A029</accession>
<accession>P45498</accession>
<keyword id="KW-0002">3D-structure</keyword>
<keyword id="KW-0131">Cell cycle</keyword>
<keyword id="KW-0132">Cell division</keyword>
<keyword id="KW-0963">Cytoplasm</keyword>
<keyword id="KW-0342">GTP-binding</keyword>
<keyword id="KW-0547">Nucleotide-binding</keyword>
<keyword id="KW-0717">Septation</keyword>